<dbReference type="EMBL" id="AJ291988">
    <property type="protein sequence ID" value="CAC40782.1"/>
    <property type="molecule type" value="Genomic_DNA"/>
</dbReference>
<dbReference type="SMR" id="Q93KD6"/>
<dbReference type="TCDB" id="3.A.1.6.2">
    <property type="family name" value="the atp-binding cassette (abc) superfamily"/>
</dbReference>
<dbReference type="BRENDA" id="7.3.2.6">
    <property type="organism ID" value="2180"/>
</dbReference>
<dbReference type="GO" id="GO:0005886">
    <property type="term" value="C:plasma membrane"/>
    <property type="evidence" value="ECO:0007669"/>
    <property type="project" value="UniProtKB-SubCell"/>
</dbReference>
<dbReference type="Gene3D" id="3.40.190.10">
    <property type="entry name" value="Periplasmic binding protein-like II"/>
    <property type="match status" value="2"/>
</dbReference>
<dbReference type="InterPro" id="IPR052738">
    <property type="entry name" value="ABC-Tungstate_binding"/>
</dbReference>
<dbReference type="InterPro" id="IPR024370">
    <property type="entry name" value="PBP_domain"/>
</dbReference>
<dbReference type="PANTHER" id="PTHR37945">
    <property type="entry name" value="EXTRACELLULAR TUNGSTATE BINDING PROTEIN"/>
    <property type="match status" value="1"/>
</dbReference>
<dbReference type="PANTHER" id="PTHR37945:SF1">
    <property type="entry name" value="EXTRACELLULAR TUNGSTATE BINDING PROTEIN"/>
    <property type="match status" value="1"/>
</dbReference>
<dbReference type="Pfam" id="PF12849">
    <property type="entry name" value="PBP_like_2"/>
    <property type="match status" value="1"/>
</dbReference>
<dbReference type="SUPFAM" id="SSF53850">
    <property type="entry name" value="Periplasmic binding protein-like II"/>
    <property type="match status" value="1"/>
</dbReference>
<dbReference type="PROSITE" id="PS51257">
    <property type="entry name" value="PROKAR_LIPOPROTEIN"/>
    <property type="match status" value="1"/>
</dbReference>
<gene>
    <name evidence="3" type="primary">tupA</name>
</gene>
<reference key="1">
    <citation type="journal article" date="2001" name="J. Biol. Chem.">
        <title>Tungstate uptake by a highly specific ABC transporter in Eubacterium acidaminophilum.</title>
        <authorList>
            <person name="Makdessi K."/>
            <person name="Andreesen J.R."/>
            <person name="Pich A."/>
        </authorList>
    </citation>
    <scope>NUCLEOTIDE SEQUENCE [GENOMIC DNA]</scope>
    <scope>FUNCTION</scope>
    <scope>SUBUNIT</scope>
    <scope>SUBCELLULAR LOCATION</scope>
    <source>
        <strain>ATCC 49065 / DSM 3953 / al-2</strain>
    </source>
</reference>
<feature type="signal peptide" evidence="1">
    <location>
        <begin position="1"/>
        <end position="20"/>
    </location>
</feature>
<feature type="chain" id="PRO_5004319715" description="Tungstate-binding protein TupA">
    <location>
        <begin position="21"/>
        <end position="286"/>
    </location>
</feature>
<feature type="lipid moiety-binding region" description="N-palmitoyl cysteine" evidence="1">
    <location>
        <position position="21"/>
    </location>
</feature>
<feature type="lipid moiety-binding region" description="S-diacylglycerol cysteine" evidence="1">
    <location>
        <position position="21"/>
    </location>
</feature>
<evidence type="ECO:0000255" key="1">
    <source>
        <dbReference type="PROSITE-ProRule" id="PRU00303"/>
    </source>
</evidence>
<evidence type="ECO:0000269" key="2">
    <source>
    </source>
</evidence>
<evidence type="ECO:0000303" key="3">
    <source>
    </source>
</evidence>
<evidence type="ECO:0000305" key="4"/>
<accession>Q93KD6</accession>
<proteinExistence type="evidence at protein level"/>
<sequence length="286" mass="30875">MKRLLSIITAVMMLALALTGCAAKQSPEGEVEKTQAKGSIILATTTSTSDSGLLDYLLPEFTKDTGIEAKVVAVGTGQALQMGKDGEADVLLVHSKAAEEEFVAAGDGLERKDVMYNDFILVGPANDPLKLKQELPNDIVGALKKISEQKFKFISRGDDSGTHKKELALWTEVGITPEGDYYVSAGRGMGDVLKMADEMQAYTIADRGTYLSMKADLGLDIIVEKDTNLFNQYGVIPVNPDKNENINAEGAKAFEEWILSEKAQSLIGEYGKEKYGAPLFTPNAAK</sequence>
<organism>
    <name type="scientific">Peptoclostridium acidaminophilum</name>
    <name type="common">Eubacterium acidaminophilum</name>
    <dbReference type="NCBI Taxonomy" id="1731"/>
    <lineage>
        <taxon>Bacteria</taxon>
        <taxon>Bacillati</taxon>
        <taxon>Bacillota</taxon>
        <taxon>Clostridia</taxon>
        <taxon>Peptostreptococcales</taxon>
        <taxon>Peptoclostridiaceae</taxon>
        <taxon>Peptoclostridium</taxon>
    </lineage>
</organism>
<keyword id="KW-1003">Cell membrane</keyword>
<keyword id="KW-0449">Lipoprotein</keyword>
<keyword id="KW-0472">Membrane</keyword>
<keyword id="KW-0564">Palmitate</keyword>
<keyword id="KW-0732">Signal</keyword>
<keyword id="KW-0813">Transport</keyword>
<keyword id="KW-0826">Tungsten</keyword>
<name>TUPA_PEPAC</name>
<protein>
    <recommendedName>
        <fullName evidence="4">Tungstate-binding protein TupA</fullName>
    </recommendedName>
</protein>
<comment type="function">
    <text evidence="2">Part of an ABC transporter complex involved in tungstate uptake. Specifically binds tungstate.</text>
</comment>
<comment type="subunit">
    <text evidence="2 4">Monomer (PubMed:11292832). The complex is composed of two ATP-binding proteins (TupC), two transmembrane proteins (TupB) and a solute-binding protein (TupA) (Probable).</text>
</comment>
<comment type="subcellular location">
    <subcellularLocation>
        <location evidence="2">Cell membrane</location>
        <topology evidence="1">Lipid-anchor</topology>
    </subcellularLocation>
</comment>